<sequence length="90" mass="9732">MCIGVPGQIRTIDGNQAKVDVCGIQRDVDLTLVGSCDENGQPRVGQWVLVHVGFAMSVINEAEARDTLDALQNMFDVEPDVGALLYGEEK</sequence>
<proteinExistence type="evidence at protein level"/>
<feature type="initiator methionine" description="Removed" evidence="11">
    <location>
        <position position="1"/>
    </location>
</feature>
<feature type="chain" id="PRO_0000201398" description="Hydrogenase maturation factor HypC">
    <location>
        <begin position="2"/>
        <end position="90"/>
    </location>
</feature>
<feature type="site" description="Important for interaction with HypD and the precursor form of hydrogenase" evidence="1 3">
    <location>
        <position position="2"/>
    </location>
</feature>
<feature type="mutagenesis site" description="Lack of hydrogenase 3 activity. Cannot interact with pre-HycE or HypD. Does not bind iron." evidence="1 3 6">
    <original>C</original>
    <variation>A</variation>
    <location>
        <position position="2"/>
    </location>
</feature>
<feature type="mutagenesis site" description="Lack of hydrogenase 3 activity. Cannot interact with pre-HycE or HypD." evidence="1 3">
    <original>C</original>
    <variation>R</variation>
    <variation>S</variation>
    <location>
        <position position="2"/>
    </location>
</feature>
<feature type="mutagenesis site" description="No change in hydrogenase 3 activity. Does not affect interaction with HypD." evidence="1 3">
    <original>P</original>
    <variation>A</variation>
    <variation>T</variation>
    <location>
        <position position="6"/>
    </location>
</feature>
<feature type="mutagenesis site" description="Does not bind iron." evidence="6">
    <original>H</original>
    <variation>R</variation>
    <location>
        <position position="51"/>
    </location>
</feature>
<feature type="strand" evidence="13">
    <location>
        <begin position="4"/>
        <end position="12"/>
    </location>
</feature>
<feature type="strand" evidence="13">
    <location>
        <begin position="14"/>
        <end position="20"/>
    </location>
</feature>
<feature type="strand" evidence="13">
    <location>
        <begin position="22"/>
        <end position="29"/>
    </location>
</feature>
<feature type="turn" evidence="13">
    <location>
        <begin position="31"/>
        <end position="33"/>
    </location>
</feature>
<feature type="strand" evidence="13">
    <location>
        <begin position="47"/>
        <end position="51"/>
    </location>
</feature>
<feature type="strand" evidence="13">
    <location>
        <begin position="54"/>
        <end position="59"/>
    </location>
</feature>
<feature type="helix" evidence="13">
    <location>
        <begin position="61"/>
        <end position="76"/>
    </location>
</feature>
<feature type="helix" evidence="13">
    <location>
        <begin position="80"/>
        <end position="85"/>
    </location>
</feature>
<organism>
    <name type="scientific">Escherichia coli (strain K12)</name>
    <dbReference type="NCBI Taxonomy" id="83333"/>
    <lineage>
        <taxon>Bacteria</taxon>
        <taxon>Pseudomonadati</taxon>
        <taxon>Pseudomonadota</taxon>
        <taxon>Gammaproteobacteria</taxon>
        <taxon>Enterobacterales</taxon>
        <taxon>Enterobacteriaceae</taxon>
        <taxon>Escherichia</taxon>
    </lineage>
</organism>
<comment type="function">
    <text evidence="1 2 4 5 6">Involved in the maturation of [NiFe] hydrogenases. Involved in the biosynthesis of the Fe(CN)(2)CO cofactor (PubMed:15504408, PubMed:23022438). HypC delivers iron-bound CO(2) to HypD where reduction to CO probably occurs (PubMed:23851071). In complex with HypD, accepts the cyanide ligand generated by HypF and HypE, and also coordinates the carbon monoxide ligand (PubMed:15504408, PubMed:23022438). Involved in the maturation of the hydrogenase 3 (PubMed:10783387, PubMed:11292801). Also participates in the maturation of hydrogenase 1 (PubMed:11292801).</text>
</comment>
<comment type="pathway">
    <text evidence="10">Protein modification; [NiFe] hydrogenase maturation.</text>
</comment>
<comment type="subunit">
    <text evidence="1 3 4 5 7">Homodimer (PubMed:9485446). Interacts with HypD (PubMed:12441107, PubMed:15504408, PubMed:23022438). Also forms a complex with HypD and HypE (PubMed:15504408). Interacts with the precursor form of HycE (pre-HycE), the large subunit of hydrogenase 3 (PubMed:10783387, PubMed:12441107, PubMed:9485446).</text>
</comment>
<comment type="interaction">
    <interactant intactId="EBI-552654">
        <id>P0AAM3</id>
    </interactant>
    <interactant intactId="EBI-552719">
        <id>P0A8N3</id>
        <label>lysS</label>
    </interactant>
    <organismsDiffer>false</organismsDiffer>
    <experiments>3</experiments>
</comment>
<comment type="disruption phenotype">
    <text evidence="2">Deletion of both hybG and hypC completely abolishes hydrogenase activity.</text>
</comment>
<comment type="similarity">
    <text evidence="10">Belongs to the HupF/HypC family.</text>
</comment>
<evidence type="ECO:0000269" key="1">
    <source>
    </source>
</evidence>
<evidence type="ECO:0000269" key="2">
    <source>
    </source>
</evidence>
<evidence type="ECO:0000269" key="3">
    <source>
    </source>
</evidence>
<evidence type="ECO:0000269" key="4">
    <source>
    </source>
</evidence>
<evidence type="ECO:0000269" key="5">
    <source>
    </source>
</evidence>
<evidence type="ECO:0000269" key="6">
    <source>
    </source>
</evidence>
<evidence type="ECO:0000269" key="7">
    <source>
    </source>
</evidence>
<evidence type="ECO:0000303" key="8">
    <source>
    </source>
</evidence>
<evidence type="ECO:0000303" key="9">
    <source>
    </source>
</evidence>
<evidence type="ECO:0000305" key="10"/>
<evidence type="ECO:0000305" key="11">
    <source>
    </source>
</evidence>
<evidence type="ECO:0007744" key="12">
    <source>
        <dbReference type="PDB" id="2OT2"/>
    </source>
</evidence>
<evidence type="ECO:0007829" key="13">
    <source>
        <dbReference type="PDB" id="2OT2"/>
    </source>
</evidence>
<gene>
    <name evidence="9" type="primary">hypC</name>
    <name type="ordered locus">b2728</name>
    <name type="ordered locus">JW2698</name>
</gene>
<reference key="1">
    <citation type="journal article" date="1991" name="Mol. Microbiol.">
        <title>Molecular characterization of an operon (hyp) necessary for the activity of the three hydrogenase isoenzymes in Escherichia coli.</title>
        <authorList>
            <person name="Lutz S."/>
            <person name="Jacobi A."/>
            <person name="Schlensog V."/>
            <person name="Boehm R."/>
            <person name="Sawers G."/>
            <person name="Boeck A."/>
        </authorList>
    </citation>
    <scope>NUCLEOTIDE SEQUENCE [GENOMIC DNA]</scope>
</reference>
<reference key="2">
    <citation type="journal article" date="1997" name="Science">
        <title>The complete genome sequence of Escherichia coli K-12.</title>
        <authorList>
            <person name="Blattner F.R."/>
            <person name="Plunkett G. III"/>
            <person name="Bloch C.A."/>
            <person name="Perna N.T."/>
            <person name="Burland V."/>
            <person name="Riley M."/>
            <person name="Collado-Vides J."/>
            <person name="Glasner J.D."/>
            <person name="Rode C.K."/>
            <person name="Mayhew G.F."/>
            <person name="Gregor J."/>
            <person name="Davis N.W."/>
            <person name="Kirkpatrick H.A."/>
            <person name="Goeden M.A."/>
            <person name="Rose D.J."/>
            <person name="Mau B."/>
            <person name="Shao Y."/>
        </authorList>
    </citation>
    <scope>NUCLEOTIDE SEQUENCE [LARGE SCALE GENOMIC DNA]</scope>
    <source>
        <strain>K12 / MG1655 / ATCC 47076</strain>
    </source>
</reference>
<reference key="3">
    <citation type="journal article" date="2006" name="Mol. Syst. Biol.">
        <title>Highly accurate genome sequences of Escherichia coli K-12 strains MG1655 and W3110.</title>
        <authorList>
            <person name="Hayashi K."/>
            <person name="Morooka N."/>
            <person name="Yamamoto Y."/>
            <person name="Fujita K."/>
            <person name="Isono K."/>
            <person name="Choi S."/>
            <person name="Ohtsubo E."/>
            <person name="Baba T."/>
            <person name="Wanner B.L."/>
            <person name="Mori H."/>
            <person name="Horiuchi T."/>
        </authorList>
    </citation>
    <scope>NUCLEOTIDE SEQUENCE [LARGE SCALE GENOMIC DNA]</scope>
    <source>
        <strain>K12 / W3110 / ATCC 27325 / DSM 5911</strain>
    </source>
</reference>
<reference key="4">
    <citation type="journal article" date="1997" name="Electrophoresis">
        <title>Escherichia coli proteome analysis using the gene-protein database.</title>
        <authorList>
            <person name="VanBogelen R.A."/>
            <person name="Abshire K.Z."/>
            <person name="Moldover B."/>
            <person name="Olson E.R."/>
            <person name="Neidhardt F.C."/>
        </authorList>
    </citation>
    <scope>IDENTIFICATION BY 2D-GEL</scope>
</reference>
<reference key="5">
    <citation type="journal article" date="1998" name="Biochemistry">
        <title>Interaction of the hydrogenase accessory protein HypC with HycE, the large subunit of Escherichia coli hydrogenase 3 during enzyme maturation.</title>
        <authorList>
            <person name="Drapal N."/>
            <person name="Boeck A."/>
        </authorList>
    </citation>
    <scope>SUBUNIT</scope>
    <scope>INTERACTION WITH HYCE</scope>
</reference>
<reference key="6">
    <citation type="journal article" date="2000" name="J. Biol. Chem.">
        <title>Analysis of the HypC-hycE complex, a key intermediate in the assembly of the metal center of the Escherichia coli hydrogenase 3.</title>
        <authorList>
            <person name="Magalon A."/>
            <person name="Bock A."/>
        </authorList>
    </citation>
    <scope>FUNCTION</scope>
    <scope>INTERACTION WITH HYCE</scope>
    <scope>MUTAGENESIS OF CYS-2 AND PRO-6</scope>
</reference>
<reference key="7">
    <citation type="journal article" date="2001" name="J. Bacteriol.">
        <title>Interplay between the specific chaperone-like proteins HybG and HypC in maturation of hydrogenases 1, 2, and 3 from Escherichia coli.</title>
        <authorList>
            <person name="Blokesch M."/>
            <person name="Magalon A."/>
            <person name="Boeck A."/>
        </authorList>
    </citation>
    <scope>FUNCTION</scope>
    <scope>DISRUPTION PHENOTYPE</scope>
</reference>
<reference key="8">
    <citation type="journal article" date="2002" name="J. Mol. Biol.">
        <title>Maturation of [NiFe]-hydrogenases in Escherichia coli: the HypC cycle.</title>
        <authorList>
            <person name="Blokesch M."/>
            <person name="Boeck A."/>
        </authorList>
    </citation>
    <scope>INTERACTION WITH HYCE AND HYPD</scope>
    <scope>MUTAGENESIS OF CYS-2 AND PRO-6</scope>
</reference>
<reference key="9">
    <citation type="journal article" date="2004" name="J. Mol. Biol.">
        <title>The complex between hydrogenase-maturation proteins HypC and HypD is an intermediate in the supply of cyanide to the active site iron of [NiFe]-hydrogenases.</title>
        <authorList>
            <person name="Blokesch M."/>
            <person name="Albracht S.P."/>
            <person name="Matzanke B.F."/>
            <person name="Drapal N.M."/>
            <person name="Jacobi A."/>
            <person name="Boeck A."/>
        </authorList>
    </citation>
    <scope>FUNCTION</scope>
    <scope>INTERACTION WITH HYPD AND HYPE</scope>
</reference>
<reference key="10">
    <citation type="journal article" date="2012" name="FEBS Lett.">
        <title>[NiFe]-hydrogenase maturation: isolation of a HypC-HypD complex carrying diatomic CO and CN- ligands.</title>
        <authorList>
            <person name="Soboh B."/>
            <person name="Stripp S.T."/>
            <person name="Muhr E."/>
            <person name="Granich C."/>
            <person name="Braussemann M."/>
            <person name="Herzberg M."/>
            <person name="Heberle J."/>
            <person name="Gary Sawers R."/>
        </authorList>
    </citation>
    <scope>FUNCTION</scope>
    <scope>INTERACTION WITH HYPD</scope>
</reference>
<reference key="11">
    <citation type="journal article" date="2013" name="FEBS Lett.">
        <title>The [NiFe]-hydrogenase accessory chaperones HypC and HybG of Escherichia coli are iron- and carbon dioxide-binding proteins.</title>
        <authorList>
            <person name="Soboh B."/>
            <person name="Stripp S.T."/>
            <person name="Bielak C."/>
            <person name="Lindenstrauss U."/>
            <person name="Braussemann M."/>
            <person name="Javaid M."/>
            <person name="Hallensleben M."/>
            <person name="Granich C."/>
            <person name="Herzberg M."/>
            <person name="Heberle J."/>
            <person name="Sawers R.G."/>
        </authorList>
    </citation>
    <scope>FUNCTION</scope>
    <scope>MUTAGENESIS OF CYS-2 AND HIS-51</scope>
</reference>
<reference evidence="12" key="12">
    <citation type="journal article" date="2007" name="Biochem. Biophys. Res. Commun.">
        <title>Solution structure of Escherichia coli HypC.</title>
        <authorList>
            <person name="Wang L."/>
            <person name="Xia B."/>
            <person name="Jin C."/>
        </authorList>
    </citation>
    <scope>STRUCTURE BY NMR</scope>
</reference>
<name>HYPC_ECOLI</name>
<protein>
    <recommendedName>
        <fullName evidence="10">Hydrogenase maturation factor HypC</fullName>
    </recommendedName>
    <alternativeName>
        <fullName evidence="8">Chaperone-type protein HypC</fullName>
    </alternativeName>
    <alternativeName>
        <fullName evidence="10">Hydrogenase accessory chaperone HypC</fullName>
    </alternativeName>
</protein>
<dbReference type="EMBL" id="X54543">
    <property type="protein sequence ID" value="CAA38414.1"/>
    <property type="molecule type" value="Genomic_DNA"/>
</dbReference>
<dbReference type="EMBL" id="U29579">
    <property type="protein sequence ID" value="AAA69238.1"/>
    <property type="molecule type" value="Genomic_DNA"/>
</dbReference>
<dbReference type="EMBL" id="U00096">
    <property type="protein sequence ID" value="AAC75770.1"/>
    <property type="molecule type" value="Genomic_DNA"/>
</dbReference>
<dbReference type="EMBL" id="AP009048">
    <property type="protein sequence ID" value="BAE76805.1"/>
    <property type="molecule type" value="Genomic_DNA"/>
</dbReference>
<dbReference type="PIR" id="S15199">
    <property type="entry name" value="S15199"/>
</dbReference>
<dbReference type="RefSeq" id="NP_417208.1">
    <property type="nucleotide sequence ID" value="NC_000913.3"/>
</dbReference>
<dbReference type="RefSeq" id="WP_000334881.1">
    <property type="nucleotide sequence ID" value="NZ_STEB01000027.1"/>
</dbReference>
<dbReference type="PDB" id="2OT2">
    <property type="method" value="NMR"/>
    <property type="chains" value="A=1-90"/>
</dbReference>
<dbReference type="PDBsum" id="2OT2"/>
<dbReference type="BMRB" id="P0AAM3"/>
<dbReference type="SMR" id="P0AAM3"/>
<dbReference type="BioGRID" id="4261426">
    <property type="interactions" value="9"/>
</dbReference>
<dbReference type="BioGRID" id="851524">
    <property type="interactions" value="1"/>
</dbReference>
<dbReference type="ComplexPortal" id="CPX-5284">
    <property type="entry name" value="HypCDE Ni-hydrogenase maturation complex"/>
</dbReference>
<dbReference type="DIP" id="DIP-36430N"/>
<dbReference type="FunCoup" id="P0AAM3">
    <property type="interactions" value="117"/>
</dbReference>
<dbReference type="IntAct" id="P0AAM3">
    <property type="interactions" value="9"/>
</dbReference>
<dbReference type="STRING" id="511145.b2728"/>
<dbReference type="PaxDb" id="511145-b2728"/>
<dbReference type="EnsemblBacteria" id="AAC75770">
    <property type="protein sequence ID" value="AAC75770"/>
    <property type="gene ID" value="b2728"/>
</dbReference>
<dbReference type="GeneID" id="93779280"/>
<dbReference type="GeneID" id="947192"/>
<dbReference type="KEGG" id="ecj:JW2698"/>
<dbReference type="KEGG" id="eco:b2728"/>
<dbReference type="KEGG" id="ecoc:C3026_15010"/>
<dbReference type="PATRIC" id="fig|1411691.4.peg.4013"/>
<dbReference type="EchoBASE" id="EB0480"/>
<dbReference type="eggNOG" id="COG0298">
    <property type="taxonomic scope" value="Bacteria"/>
</dbReference>
<dbReference type="HOGENOM" id="CLU_159381_1_1_6"/>
<dbReference type="InParanoid" id="P0AAM3"/>
<dbReference type="OMA" id="QKMGADY"/>
<dbReference type="OrthoDB" id="9806017at2"/>
<dbReference type="PhylomeDB" id="P0AAM3"/>
<dbReference type="BioCyc" id="EcoCyc:EG10485-MONOMER"/>
<dbReference type="BioCyc" id="MetaCyc:EG10485-MONOMER"/>
<dbReference type="UniPathway" id="UPA00335"/>
<dbReference type="EvolutionaryTrace" id="P0AAM3"/>
<dbReference type="PRO" id="PR:P0AAM3"/>
<dbReference type="Proteomes" id="UP000000625">
    <property type="component" value="Chromosome"/>
</dbReference>
<dbReference type="GO" id="GO:1902670">
    <property type="term" value="F:carbon dioxide binding"/>
    <property type="evidence" value="ECO:0000314"/>
    <property type="project" value="EcoCyc"/>
</dbReference>
<dbReference type="GO" id="GO:0042802">
    <property type="term" value="F:identical protein binding"/>
    <property type="evidence" value="ECO:0000314"/>
    <property type="project" value="EcoCyc"/>
</dbReference>
<dbReference type="GO" id="GO:0005506">
    <property type="term" value="F:iron ion binding"/>
    <property type="evidence" value="ECO:0000314"/>
    <property type="project" value="EcoCyc"/>
</dbReference>
<dbReference type="GO" id="GO:0051604">
    <property type="term" value="P:protein maturation"/>
    <property type="evidence" value="ECO:0000314"/>
    <property type="project" value="EcoCyc"/>
</dbReference>
<dbReference type="GO" id="GO:0065003">
    <property type="term" value="P:protein-containing complex assembly"/>
    <property type="evidence" value="ECO:0000303"/>
    <property type="project" value="ComplexPortal"/>
</dbReference>
<dbReference type="FunFam" id="2.30.30.140:FF:000023">
    <property type="entry name" value="Hydrogenase assembly chaperone protein HypC"/>
    <property type="match status" value="1"/>
</dbReference>
<dbReference type="Gene3D" id="2.30.30.140">
    <property type="match status" value="1"/>
</dbReference>
<dbReference type="Gene3D" id="6.10.250.910">
    <property type="match status" value="1"/>
</dbReference>
<dbReference type="InterPro" id="IPR019812">
    <property type="entry name" value="Hydgase_assmbl_chp_CS"/>
</dbReference>
<dbReference type="InterPro" id="IPR001109">
    <property type="entry name" value="Hydrogenase_HupF/HypC"/>
</dbReference>
<dbReference type="NCBIfam" id="TIGR00074">
    <property type="entry name" value="hypC_hupF"/>
    <property type="match status" value="1"/>
</dbReference>
<dbReference type="NCBIfam" id="NF007712">
    <property type="entry name" value="PRK10409.1"/>
    <property type="match status" value="1"/>
</dbReference>
<dbReference type="PANTHER" id="PTHR35177">
    <property type="entry name" value="HYDROGENASE MATURATION FACTOR HYBG"/>
    <property type="match status" value="1"/>
</dbReference>
<dbReference type="PANTHER" id="PTHR35177:SF1">
    <property type="entry name" value="HYDROGENASE MATURATION FACTOR HYPC"/>
    <property type="match status" value="1"/>
</dbReference>
<dbReference type="Pfam" id="PF01455">
    <property type="entry name" value="HupF_HypC"/>
    <property type="match status" value="1"/>
</dbReference>
<dbReference type="PRINTS" id="PR00445">
    <property type="entry name" value="HUPFHYPC"/>
</dbReference>
<dbReference type="SUPFAM" id="SSF159127">
    <property type="entry name" value="HupF/HypC-like"/>
    <property type="match status" value="1"/>
</dbReference>
<dbReference type="PROSITE" id="PS01097">
    <property type="entry name" value="HUPF_HYPC"/>
    <property type="match status" value="1"/>
</dbReference>
<keyword id="KW-0002">3D-structure</keyword>
<keyword id="KW-1185">Reference proteome</keyword>
<accession>P0AAM3</accession>
<accession>P24191</accession>
<accession>Q2MAA1</accession>